<comment type="similarity">
    <text evidence="2">Belongs to the PRAME family.</text>
</comment>
<organism>
    <name type="scientific">Homo sapiens</name>
    <name type="common">Human</name>
    <dbReference type="NCBI Taxonomy" id="9606"/>
    <lineage>
        <taxon>Eukaryota</taxon>
        <taxon>Metazoa</taxon>
        <taxon>Chordata</taxon>
        <taxon>Craniata</taxon>
        <taxon>Vertebrata</taxon>
        <taxon>Euteleostomi</taxon>
        <taxon>Mammalia</taxon>
        <taxon>Eutheria</taxon>
        <taxon>Euarchontoglires</taxon>
        <taxon>Primates</taxon>
        <taxon>Haplorrhini</taxon>
        <taxon>Catarrhini</taxon>
        <taxon>Hominidae</taxon>
        <taxon>Homo</taxon>
    </lineage>
</organism>
<sequence>MSIRAPPRLLELARQRLLRDQALAISTMEELPRELFPTLFMEAFSRRRCETLKTMVQAWPFTRLPLGSLMKSPHLESLKSVLEGVDVLLTQEVRPRQSKLQVLDLRNVDENFCDIFSGATASFPEALSQKQTADNCPGTGRQQPFMVFIDLCLKNRTLDECLTHLLEWGKQRKGLLHVCCKELQVFGMPIHSIIEVLNMVELDCIQEVEVCCPWELSTLVKFAPYLGQMRNLRKLVLFNIRASACIPPDNKGQFIARFTSQFLKLDYFQNLSMHSVSFLEGHLDQLLRCLQASLEMVVMTDCLLSESDLKHLSWCPSIRQLKELDLRGVTLTHFSPEPLTGLLEQAVATLQTLDLEDCGIMDSQLSAILPVLSRCSQLSTFSFCGNLISMAALENLLRHTVGLSKLSLELYPAPLESYDTQGALCWGRFAELGAELMNTLRDLRQPKIIVFCTVPCPRCGIRASYDLEPSHCLC</sequence>
<dbReference type="EMBL" id="AC245034">
    <property type="status" value="NOT_ANNOTATED_CDS"/>
    <property type="molecule type" value="Genomic_DNA"/>
</dbReference>
<dbReference type="EMBL" id="AL358783">
    <property type="status" value="NOT_ANNOTATED_CDS"/>
    <property type="molecule type" value="Genomic_DNA"/>
</dbReference>
<dbReference type="EMBL" id="BC140755">
    <property type="protein sequence ID" value="AAI40756.1"/>
    <property type="molecule type" value="mRNA"/>
</dbReference>
<dbReference type="CCDS" id="CCDS30593.1"/>
<dbReference type="RefSeq" id="NP_001012277.2">
    <property type="nucleotide sequence ID" value="NM_001012277.5"/>
</dbReference>
<dbReference type="SMR" id="Q5VXH5"/>
<dbReference type="FunCoup" id="Q5VXH5">
    <property type="interactions" value="58"/>
</dbReference>
<dbReference type="STRING" id="9606.ENSP00000484237"/>
<dbReference type="iPTMnet" id="Q5VXH5"/>
<dbReference type="PhosphoSitePlus" id="Q5VXH5"/>
<dbReference type="BioMuta" id="PRAMEF7"/>
<dbReference type="DMDM" id="74757002"/>
<dbReference type="MassIVE" id="Q5VXH5"/>
<dbReference type="PaxDb" id="9606-ENSP00000484237"/>
<dbReference type="Pumba" id="Q5VXH5"/>
<dbReference type="Antibodypedia" id="71954">
    <property type="antibodies" value="20 antibodies from 8 providers"/>
</dbReference>
<dbReference type="DNASU" id="441871"/>
<dbReference type="Ensembl" id="ENST00000330881.6">
    <property type="protein sequence ID" value="ENSP00000328915.5"/>
    <property type="gene ID" value="ENSG00000204510.6"/>
</dbReference>
<dbReference type="Ensembl" id="ENST00000355096.4">
    <property type="protein sequence ID" value="ENSP00000347211.4"/>
    <property type="gene ID" value="ENSG00000279195.2"/>
</dbReference>
<dbReference type="Ensembl" id="ENST00000633146.1">
    <property type="protein sequence ID" value="ENSP00000488446.1"/>
    <property type="gene ID" value="ENSG00000279195.2"/>
</dbReference>
<dbReference type="Ensembl" id="ENST00000697200.1">
    <property type="protein sequence ID" value="ENSP00000513184.1"/>
    <property type="gene ID" value="ENSG00000204510.6"/>
</dbReference>
<dbReference type="GeneID" id="441871"/>
<dbReference type="KEGG" id="hsa:441871"/>
<dbReference type="MANE-Select" id="ENST00000697200.1">
    <property type="protein sequence ID" value="ENSP00000513184.1"/>
    <property type="RefSeq nucleotide sequence ID" value="NM_001012277.5"/>
    <property type="RefSeq protein sequence ID" value="NP_001012277.2"/>
</dbReference>
<dbReference type="UCSC" id="uc031tpm.1">
    <property type="organism name" value="human"/>
</dbReference>
<dbReference type="UCSC" id="uc057ckj.1">
    <property type="organism name" value="human"/>
</dbReference>
<dbReference type="AGR" id="HGNC:28415"/>
<dbReference type="CTD" id="441871"/>
<dbReference type="GeneCards" id="PRAMEF7"/>
<dbReference type="HGNC" id="HGNC:28415">
    <property type="gene designation" value="PRAMEF7"/>
</dbReference>
<dbReference type="HPA" id="ENSG00000204510">
    <property type="expression patterns" value="Not detected"/>
</dbReference>
<dbReference type="neXtProt" id="NX_Q5VXH5"/>
<dbReference type="OpenTargets" id="ENSG00000204510"/>
<dbReference type="PharmGKB" id="PA142671144"/>
<dbReference type="VEuPathDB" id="HostDB:ENSG00000204510"/>
<dbReference type="eggNOG" id="ENOG502QWSJ">
    <property type="taxonomic scope" value="Eukaryota"/>
</dbReference>
<dbReference type="GeneTree" id="ENSGT01030000234531"/>
<dbReference type="InParanoid" id="Q5VXH5"/>
<dbReference type="OMA" id="YSWPRRE"/>
<dbReference type="OrthoDB" id="10624at9604"/>
<dbReference type="PAN-GO" id="Q5VXH5">
    <property type="GO annotations" value="1 GO annotation based on evolutionary models"/>
</dbReference>
<dbReference type="TreeFam" id="TF332708"/>
<dbReference type="PathwayCommons" id="Q5VXH5"/>
<dbReference type="BioGRID-ORCS" id="441871">
    <property type="hits" value="38 hits in 1014 CRISPR screens"/>
</dbReference>
<dbReference type="GenomeRNAi" id="441871"/>
<dbReference type="Pharos" id="Q5VXH5">
    <property type="development level" value="Tdark"/>
</dbReference>
<dbReference type="PRO" id="PR:Q5VXH5"/>
<dbReference type="Proteomes" id="UP000005640">
    <property type="component" value="Chromosome 1"/>
</dbReference>
<dbReference type="RNAct" id="Q5VXH5">
    <property type="molecule type" value="protein"/>
</dbReference>
<dbReference type="Bgee" id="ENSG00000204510">
    <property type="expression patterns" value="Expressed in liver"/>
</dbReference>
<dbReference type="GO" id="GO:0031462">
    <property type="term" value="C:Cul2-RING ubiquitin ligase complex"/>
    <property type="evidence" value="ECO:0000318"/>
    <property type="project" value="GO_Central"/>
</dbReference>
<dbReference type="GO" id="GO:0005737">
    <property type="term" value="C:cytoplasm"/>
    <property type="evidence" value="ECO:0000318"/>
    <property type="project" value="GO_Central"/>
</dbReference>
<dbReference type="GO" id="GO:1990756">
    <property type="term" value="F:ubiquitin-like ligase-substrate adaptor activity"/>
    <property type="evidence" value="ECO:0000318"/>
    <property type="project" value="GO_Central"/>
</dbReference>
<dbReference type="GO" id="GO:0043066">
    <property type="term" value="P:negative regulation of apoptotic process"/>
    <property type="evidence" value="ECO:0007669"/>
    <property type="project" value="InterPro"/>
</dbReference>
<dbReference type="GO" id="GO:0045596">
    <property type="term" value="P:negative regulation of cell differentiation"/>
    <property type="evidence" value="ECO:0007669"/>
    <property type="project" value="InterPro"/>
</dbReference>
<dbReference type="GO" id="GO:0045892">
    <property type="term" value="P:negative regulation of DNA-templated transcription"/>
    <property type="evidence" value="ECO:0007669"/>
    <property type="project" value="InterPro"/>
</dbReference>
<dbReference type="GO" id="GO:0008284">
    <property type="term" value="P:positive regulation of cell population proliferation"/>
    <property type="evidence" value="ECO:0007669"/>
    <property type="project" value="InterPro"/>
</dbReference>
<dbReference type="GO" id="GO:0043161">
    <property type="term" value="P:proteasome-mediated ubiquitin-dependent protein catabolic process"/>
    <property type="evidence" value="ECO:0000318"/>
    <property type="project" value="GO_Central"/>
</dbReference>
<dbReference type="FunFam" id="3.80.10.10:FF:000079">
    <property type="entry name" value="PRAME family member 18"/>
    <property type="match status" value="1"/>
</dbReference>
<dbReference type="Gene3D" id="3.80.10.10">
    <property type="entry name" value="Ribonuclease Inhibitor"/>
    <property type="match status" value="1"/>
</dbReference>
<dbReference type="InterPro" id="IPR032675">
    <property type="entry name" value="LRR_dom_sf"/>
</dbReference>
<dbReference type="InterPro" id="IPR026271">
    <property type="entry name" value="PRAME"/>
</dbReference>
<dbReference type="InterPro" id="IPR050694">
    <property type="entry name" value="PRAME_domain"/>
</dbReference>
<dbReference type="PANTHER" id="PTHR14224:SF30">
    <property type="entry name" value="PRAME FAMILY MEMBER 7-RELATED"/>
    <property type="match status" value="1"/>
</dbReference>
<dbReference type="PANTHER" id="PTHR14224">
    <property type="entry name" value="SIMILAR TO PREFERENTIALLY EXPRESSED ANTIGEN IN MELANOMA-LIKE 3"/>
    <property type="match status" value="1"/>
</dbReference>
<dbReference type="PIRSF" id="PIRSF038286">
    <property type="entry name" value="PRAME"/>
    <property type="match status" value="1"/>
</dbReference>
<dbReference type="SUPFAM" id="SSF52047">
    <property type="entry name" value="RNI-like"/>
    <property type="match status" value="1"/>
</dbReference>
<proteinExistence type="evidence at transcript level"/>
<evidence type="ECO:0000250" key="1">
    <source>
        <dbReference type="UniProtKB" id="Q3UWY1"/>
    </source>
</evidence>
<evidence type="ECO:0000305" key="2"/>
<evidence type="ECO:0000312" key="3">
    <source>
        <dbReference type="HGNC" id="HGNC:28415"/>
    </source>
</evidence>
<name>PRAM7_HUMAN</name>
<feature type="chain" id="PRO_0000156981" description="PRAME family member 7">
    <location>
        <begin position="1"/>
        <end position="474"/>
    </location>
</feature>
<feature type="repeat" description="LRR 1; degenerate" evidence="1">
    <location>
        <begin position="97"/>
        <end position="122"/>
    </location>
</feature>
<feature type="repeat" description="LRR 2; degenerate" evidence="1">
    <location>
        <begin position="177"/>
        <end position="201"/>
    </location>
</feature>
<feature type="repeat" description="LRR 3; degenerate" evidence="1">
    <location>
        <begin position="202"/>
        <end position="228"/>
    </location>
</feature>
<feature type="repeat" description="LRR 4; degenerate" evidence="1">
    <location>
        <begin position="229"/>
        <end position="264"/>
    </location>
</feature>
<feature type="repeat" description="LRR 5" evidence="1">
    <location>
        <begin position="265"/>
        <end position="290"/>
    </location>
</feature>
<feature type="repeat" description="LRR 6" evidence="1">
    <location>
        <begin position="291"/>
        <end position="322"/>
    </location>
</feature>
<feature type="repeat" description="LRR 7" evidence="1">
    <location>
        <begin position="323"/>
        <end position="341"/>
    </location>
</feature>
<feature type="repeat" description="LRR 8" evidence="1">
    <location>
        <begin position="347"/>
        <end position="374"/>
    </location>
</feature>
<feature type="repeat" description="LRR 9" evidence="1">
    <location>
        <begin position="375"/>
        <end position="399"/>
    </location>
</feature>
<feature type="sequence conflict" description="In Ref. 2; AAI40756." evidence="2" ref="2">
    <original>A</original>
    <variation>V</variation>
    <location>
        <position position="346"/>
    </location>
</feature>
<feature type="sequence conflict" description="In Ref. 2; AAI40756." evidence="2" ref="2">
    <original>N</original>
    <variation>K</variation>
    <location>
        <position position="438"/>
    </location>
</feature>
<feature type="sequence conflict" description="In Ref. 2; AAI40756." evidence="2" ref="2">
    <original>L</original>
    <variation>P</variation>
    <location>
        <position position="440"/>
    </location>
</feature>
<reference key="1">
    <citation type="journal article" date="2006" name="Nature">
        <title>The DNA sequence and biological annotation of human chromosome 1.</title>
        <authorList>
            <person name="Gregory S.G."/>
            <person name="Barlow K.F."/>
            <person name="McLay K.E."/>
            <person name="Kaul R."/>
            <person name="Swarbreck D."/>
            <person name="Dunham A."/>
            <person name="Scott C.E."/>
            <person name="Howe K.L."/>
            <person name="Woodfine K."/>
            <person name="Spencer C.C.A."/>
            <person name="Jones M.C."/>
            <person name="Gillson C."/>
            <person name="Searle S."/>
            <person name="Zhou Y."/>
            <person name="Kokocinski F."/>
            <person name="McDonald L."/>
            <person name="Evans R."/>
            <person name="Phillips K."/>
            <person name="Atkinson A."/>
            <person name="Cooper R."/>
            <person name="Jones C."/>
            <person name="Hall R.E."/>
            <person name="Andrews T.D."/>
            <person name="Lloyd C."/>
            <person name="Ainscough R."/>
            <person name="Almeida J.P."/>
            <person name="Ambrose K.D."/>
            <person name="Anderson F."/>
            <person name="Andrew R.W."/>
            <person name="Ashwell R.I.S."/>
            <person name="Aubin K."/>
            <person name="Babbage A.K."/>
            <person name="Bagguley C.L."/>
            <person name="Bailey J."/>
            <person name="Beasley H."/>
            <person name="Bethel G."/>
            <person name="Bird C.P."/>
            <person name="Bray-Allen S."/>
            <person name="Brown J.Y."/>
            <person name="Brown A.J."/>
            <person name="Buckley D."/>
            <person name="Burton J."/>
            <person name="Bye J."/>
            <person name="Carder C."/>
            <person name="Chapman J.C."/>
            <person name="Clark S.Y."/>
            <person name="Clarke G."/>
            <person name="Clee C."/>
            <person name="Cobley V."/>
            <person name="Collier R.E."/>
            <person name="Corby N."/>
            <person name="Coville G.J."/>
            <person name="Davies J."/>
            <person name="Deadman R."/>
            <person name="Dunn M."/>
            <person name="Earthrowl M."/>
            <person name="Ellington A.G."/>
            <person name="Errington H."/>
            <person name="Frankish A."/>
            <person name="Frankland J."/>
            <person name="French L."/>
            <person name="Garner P."/>
            <person name="Garnett J."/>
            <person name="Gay L."/>
            <person name="Ghori M.R.J."/>
            <person name="Gibson R."/>
            <person name="Gilby L.M."/>
            <person name="Gillett W."/>
            <person name="Glithero R.J."/>
            <person name="Grafham D.V."/>
            <person name="Griffiths C."/>
            <person name="Griffiths-Jones S."/>
            <person name="Grocock R."/>
            <person name="Hammond S."/>
            <person name="Harrison E.S.I."/>
            <person name="Hart E."/>
            <person name="Haugen E."/>
            <person name="Heath P.D."/>
            <person name="Holmes S."/>
            <person name="Holt K."/>
            <person name="Howden P.J."/>
            <person name="Hunt A.R."/>
            <person name="Hunt S.E."/>
            <person name="Hunter G."/>
            <person name="Isherwood J."/>
            <person name="James R."/>
            <person name="Johnson C."/>
            <person name="Johnson D."/>
            <person name="Joy A."/>
            <person name="Kay M."/>
            <person name="Kershaw J.K."/>
            <person name="Kibukawa M."/>
            <person name="Kimberley A.M."/>
            <person name="King A."/>
            <person name="Knights A.J."/>
            <person name="Lad H."/>
            <person name="Laird G."/>
            <person name="Lawlor S."/>
            <person name="Leongamornlert D.A."/>
            <person name="Lloyd D.M."/>
            <person name="Loveland J."/>
            <person name="Lovell J."/>
            <person name="Lush M.J."/>
            <person name="Lyne R."/>
            <person name="Martin S."/>
            <person name="Mashreghi-Mohammadi M."/>
            <person name="Matthews L."/>
            <person name="Matthews N.S.W."/>
            <person name="McLaren S."/>
            <person name="Milne S."/>
            <person name="Mistry S."/>
            <person name="Moore M.J.F."/>
            <person name="Nickerson T."/>
            <person name="O'Dell C.N."/>
            <person name="Oliver K."/>
            <person name="Palmeiri A."/>
            <person name="Palmer S.A."/>
            <person name="Parker A."/>
            <person name="Patel D."/>
            <person name="Pearce A.V."/>
            <person name="Peck A.I."/>
            <person name="Pelan S."/>
            <person name="Phelps K."/>
            <person name="Phillimore B.J."/>
            <person name="Plumb R."/>
            <person name="Rajan J."/>
            <person name="Raymond C."/>
            <person name="Rouse G."/>
            <person name="Saenphimmachak C."/>
            <person name="Sehra H.K."/>
            <person name="Sheridan E."/>
            <person name="Shownkeen R."/>
            <person name="Sims S."/>
            <person name="Skuce C.D."/>
            <person name="Smith M."/>
            <person name="Steward C."/>
            <person name="Subramanian S."/>
            <person name="Sycamore N."/>
            <person name="Tracey A."/>
            <person name="Tromans A."/>
            <person name="Van Helmond Z."/>
            <person name="Wall M."/>
            <person name="Wallis J.M."/>
            <person name="White S."/>
            <person name="Whitehead S.L."/>
            <person name="Wilkinson J.E."/>
            <person name="Willey D.L."/>
            <person name="Williams H."/>
            <person name="Wilming L."/>
            <person name="Wray P.W."/>
            <person name="Wu Z."/>
            <person name="Coulson A."/>
            <person name="Vaudin M."/>
            <person name="Sulston J.E."/>
            <person name="Durbin R.M."/>
            <person name="Hubbard T."/>
            <person name="Wooster R."/>
            <person name="Dunham I."/>
            <person name="Carter N.P."/>
            <person name="McVean G."/>
            <person name="Ross M.T."/>
            <person name="Harrow J."/>
            <person name="Olson M.V."/>
            <person name="Beck S."/>
            <person name="Rogers J."/>
            <person name="Bentley D.R."/>
        </authorList>
    </citation>
    <scope>NUCLEOTIDE SEQUENCE [LARGE SCALE GENOMIC DNA]</scope>
</reference>
<reference key="2">
    <citation type="journal article" date="2004" name="Genome Res.">
        <title>The status, quality, and expansion of the NIH full-length cDNA project: the Mammalian Gene Collection (MGC).</title>
        <authorList>
            <consortium name="The MGC Project Team"/>
        </authorList>
    </citation>
    <scope>NUCLEOTIDE SEQUENCE [LARGE SCALE MRNA]</scope>
</reference>
<accession>Q5VXH5</accession>
<accession>A0A087X1I7</accession>
<accession>A0A0A6YYA1</accession>
<accession>B9EIP0</accession>
<gene>
    <name evidence="3" type="primary">PRAMEF7</name>
</gene>
<protein>
    <recommendedName>
        <fullName evidence="3">PRAME family member 7</fullName>
    </recommendedName>
</protein>
<keyword id="KW-0433">Leucine-rich repeat</keyword>
<keyword id="KW-1185">Reference proteome</keyword>
<keyword id="KW-0677">Repeat</keyword>